<evidence type="ECO:0000255" key="1">
    <source>
        <dbReference type="HAMAP-Rule" id="MF_01310"/>
    </source>
</evidence>
<evidence type="ECO:0000305" key="2"/>
<keyword id="KW-0687">Ribonucleoprotein</keyword>
<keyword id="KW-0689">Ribosomal protein</keyword>
<keyword id="KW-0694">RNA-binding</keyword>
<keyword id="KW-0699">rRNA-binding</keyword>
<sequence length="131" mass="13919">MAKANTASRVRKKVRKTVSEGIVHVHASFNNTIITITDRQGNALSWATSGGAGFKGSRKSTPFAAQVAAEAAGKVAQEYGVKNLEVRIKGPGPGRESSVRALNALGFKITSITDVTPLPHNGCRPPKKRRI</sequence>
<gene>
    <name evidence="1" type="primary">rpsK</name>
    <name type="ordered locus">NMC0156</name>
</gene>
<organism>
    <name type="scientific">Neisseria meningitidis serogroup C / serotype 2a (strain ATCC 700532 / DSM 15464 / FAM18)</name>
    <dbReference type="NCBI Taxonomy" id="272831"/>
    <lineage>
        <taxon>Bacteria</taxon>
        <taxon>Pseudomonadati</taxon>
        <taxon>Pseudomonadota</taxon>
        <taxon>Betaproteobacteria</taxon>
        <taxon>Neisseriales</taxon>
        <taxon>Neisseriaceae</taxon>
        <taxon>Neisseria</taxon>
    </lineage>
</organism>
<reference key="1">
    <citation type="journal article" date="2007" name="PLoS Genet.">
        <title>Meningococcal genetic variation mechanisms viewed through comparative analysis of serogroup C strain FAM18.</title>
        <authorList>
            <person name="Bentley S.D."/>
            <person name="Vernikos G.S."/>
            <person name="Snyder L.A.S."/>
            <person name="Churcher C."/>
            <person name="Arrowsmith C."/>
            <person name="Chillingworth T."/>
            <person name="Cronin A."/>
            <person name="Davis P.H."/>
            <person name="Holroyd N.E."/>
            <person name="Jagels K."/>
            <person name="Maddison M."/>
            <person name="Moule S."/>
            <person name="Rabbinowitsch E."/>
            <person name="Sharp S."/>
            <person name="Unwin L."/>
            <person name="Whitehead S."/>
            <person name="Quail M.A."/>
            <person name="Achtman M."/>
            <person name="Barrell B.G."/>
            <person name="Saunders N.J."/>
            <person name="Parkhill J."/>
        </authorList>
    </citation>
    <scope>NUCLEOTIDE SEQUENCE [LARGE SCALE GENOMIC DNA]</scope>
    <source>
        <strain>ATCC 700532 / DSM 15464 / FAM18</strain>
    </source>
</reference>
<protein>
    <recommendedName>
        <fullName evidence="1">Small ribosomal subunit protein uS11</fullName>
    </recommendedName>
    <alternativeName>
        <fullName evidence="2">30S ribosomal protein S11</fullName>
    </alternativeName>
</protein>
<feature type="chain" id="PRO_0000294808" description="Small ribosomal subunit protein uS11">
    <location>
        <begin position="1"/>
        <end position="131"/>
    </location>
</feature>
<name>RS11_NEIMF</name>
<dbReference type="EMBL" id="AM421808">
    <property type="protein sequence ID" value="CAM09475.1"/>
    <property type="molecule type" value="Genomic_DNA"/>
</dbReference>
<dbReference type="RefSeq" id="WP_002216249.1">
    <property type="nucleotide sequence ID" value="NC_008767.1"/>
</dbReference>
<dbReference type="SMR" id="A1KRJ7"/>
<dbReference type="GeneID" id="94582061"/>
<dbReference type="KEGG" id="nmc:NMC0156"/>
<dbReference type="HOGENOM" id="CLU_072439_5_0_4"/>
<dbReference type="Proteomes" id="UP000002286">
    <property type="component" value="Chromosome"/>
</dbReference>
<dbReference type="GO" id="GO:1990904">
    <property type="term" value="C:ribonucleoprotein complex"/>
    <property type="evidence" value="ECO:0007669"/>
    <property type="project" value="UniProtKB-KW"/>
</dbReference>
<dbReference type="GO" id="GO:0005840">
    <property type="term" value="C:ribosome"/>
    <property type="evidence" value="ECO:0007669"/>
    <property type="project" value="UniProtKB-KW"/>
</dbReference>
<dbReference type="GO" id="GO:0019843">
    <property type="term" value="F:rRNA binding"/>
    <property type="evidence" value="ECO:0007669"/>
    <property type="project" value="UniProtKB-UniRule"/>
</dbReference>
<dbReference type="GO" id="GO:0003735">
    <property type="term" value="F:structural constituent of ribosome"/>
    <property type="evidence" value="ECO:0007669"/>
    <property type="project" value="InterPro"/>
</dbReference>
<dbReference type="GO" id="GO:0006412">
    <property type="term" value="P:translation"/>
    <property type="evidence" value="ECO:0007669"/>
    <property type="project" value="UniProtKB-UniRule"/>
</dbReference>
<dbReference type="FunFam" id="3.30.420.80:FF:000001">
    <property type="entry name" value="30S ribosomal protein S11"/>
    <property type="match status" value="1"/>
</dbReference>
<dbReference type="Gene3D" id="3.30.420.80">
    <property type="entry name" value="Ribosomal protein S11"/>
    <property type="match status" value="1"/>
</dbReference>
<dbReference type="HAMAP" id="MF_01310">
    <property type="entry name" value="Ribosomal_uS11"/>
    <property type="match status" value="1"/>
</dbReference>
<dbReference type="InterPro" id="IPR001971">
    <property type="entry name" value="Ribosomal_uS11"/>
</dbReference>
<dbReference type="InterPro" id="IPR019981">
    <property type="entry name" value="Ribosomal_uS11_bac-type"/>
</dbReference>
<dbReference type="InterPro" id="IPR018102">
    <property type="entry name" value="Ribosomal_uS11_CS"/>
</dbReference>
<dbReference type="InterPro" id="IPR036967">
    <property type="entry name" value="Ribosomal_uS11_sf"/>
</dbReference>
<dbReference type="NCBIfam" id="NF003698">
    <property type="entry name" value="PRK05309.1"/>
    <property type="match status" value="1"/>
</dbReference>
<dbReference type="NCBIfam" id="TIGR03632">
    <property type="entry name" value="uS11_bact"/>
    <property type="match status" value="1"/>
</dbReference>
<dbReference type="PANTHER" id="PTHR11759">
    <property type="entry name" value="40S RIBOSOMAL PROTEIN S14/30S RIBOSOMAL PROTEIN S11"/>
    <property type="match status" value="1"/>
</dbReference>
<dbReference type="Pfam" id="PF00411">
    <property type="entry name" value="Ribosomal_S11"/>
    <property type="match status" value="1"/>
</dbReference>
<dbReference type="PIRSF" id="PIRSF002131">
    <property type="entry name" value="Ribosomal_S11"/>
    <property type="match status" value="1"/>
</dbReference>
<dbReference type="SUPFAM" id="SSF53137">
    <property type="entry name" value="Translational machinery components"/>
    <property type="match status" value="1"/>
</dbReference>
<dbReference type="PROSITE" id="PS00054">
    <property type="entry name" value="RIBOSOMAL_S11"/>
    <property type="match status" value="1"/>
</dbReference>
<comment type="function">
    <text evidence="1">Located on the platform of the 30S subunit, it bridges several disparate RNA helices of the 16S rRNA. Forms part of the Shine-Dalgarno cleft in the 70S ribosome.</text>
</comment>
<comment type="subunit">
    <text evidence="1">Part of the 30S ribosomal subunit. Interacts with proteins S7 and S18. Binds to IF-3.</text>
</comment>
<comment type="similarity">
    <text evidence="1">Belongs to the universal ribosomal protein uS11 family.</text>
</comment>
<proteinExistence type="inferred from homology"/>
<accession>A1KRJ7</accession>